<organism>
    <name type="scientific">Legionella pneumophila subsp. pneumophila (strain Philadelphia 1 / ATCC 33152 / DSM 7513)</name>
    <dbReference type="NCBI Taxonomy" id="272624"/>
    <lineage>
        <taxon>Bacteria</taxon>
        <taxon>Pseudomonadati</taxon>
        <taxon>Pseudomonadota</taxon>
        <taxon>Gammaproteobacteria</taxon>
        <taxon>Legionellales</taxon>
        <taxon>Legionellaceae</taxon>
        <taxon>Legionella</taxon>
    </lineage>
</organism>
<sequence length="707" mass="80277">MNYSLFISCSKGLEYLLEDELKGLGLHVTQVSPQGVYGEASLPVIYNLCLWSRLANRIQLILFSGHATKEQAVHQLCTDFHWQTVFTHDKTIAIEFHGASEQIRNTMFGAQIVKDGIVDHFRRLNGSRPSVDKEKPQILIHAHLKNDILTVSFDLVGYSLHQRGYRKKAGKAPLKENVAAAMLLRAKWPELAAQGYSLHDPFCGSGTLVIEAAMMAAHIAPGLLRQDQSLQYWARHQSSLWEKLRTQALQQVKPLAVKLIGTDADSKIITLARSNAERAGVLPLVEFNTLSLNACRPGTKRGLVVCNPPYGERLGEVTQLVPLYQELGTTLHTCYQGWQAAILTSSPVLAKALGLRADKQYTLYNGPLECKLYCLTLSAANKLKNTPNAPLSDNAQMLFNRLEKNRNHLQKWARKNQITCYRIYDADLPEYAYAIDIYNDYAVLQEYAPPASIPVHKAEKRSLEMLQVVPRALGIHPEKLIVKQRKQQKGSEQYQKIGKTSQRLIVTEGKAKLIVNLYDYLDTGLFLDHRLMRLKFAQLEPGTRFLNCFCYTASASVHAALAGALTTNVDLSKTYLLWAEDNFRLNDINLSKHQFLQYDCKEWMKTTRDKFDVIFLDPPSFSNSKRMSDILDIQRDHVSLINMAMRLLNPDGVLYFSTNLRQFKLEPMLKEKYAVQDITPQTIDQDFKRNSKIHHCFKIVMPHFADN</sequence>
<reference key="1">
    <citation type="journal article" date="2004" name="Science">
        <title>The genomic sequence of the accidental pathogen Legionella pneumophila.</title>
        <authorList>
            <person name="Chien M."/>
            <person name="Morozova I."/>
            <person name="Shi S."/>
            <person name="Sheng H."/>
            <person name="Chen J."/>
            <person name="Gomez S.M."/>
            <person name="Asamani G."/>
            <person name="Hill K."/>
            <person name="Nuara J."/>
            <person name="Feder M."/>
            <person name="Rineer J."/>
            <person name="Greenberg J.J."/>
            <person name="Steshenko V."/>
            <person name="Park S.H."/>
            <person name="Zhao B."/>
            <person name="Teplitskaya E."/>
            <person name="Edwards J.R."/>
            <person name="Pampou S."/>
            <person name="Georghiou A."/>
            <person name="Chou I.-C."/>
            <person name="Iannuccilli W."/>
            <person name="Ulz M.E."/>
            <person name="Kim D.H."/>
            <person name="Geringer-Sameth A."/>
            <person name="Goldsberry C."/>
            <person name="Morozov P."/>
            <person name="Fischer S.G."/>
            <person name="Segal G."/>
            <person name="Qu X."/>
            <person name="Rzhetsky A."/>
            <person name="Zhang P."/>
            <person name="Cayanis E."/>
            <person name="De Jong P.J."/>
            <person name="Ju J."/>
            <person name="Kalachikov S."/>
            <person name="Shuman H.A."/>
            <person name="Russo J.J."/>
        </authorList>
    </citation>
    <scope>NUCLEOTIDE SEQUENCE [LARGE SCALE GENOMIC DNA]</scope>
    <source>
        <strain>Philadelphia 1 / ATCC 33152 / DSM 7513</strain>
    </source>
</reference>
<name>RLMKL_LEGPH</name>
<accession>Q5ZZI8</accession>
<gene>
    <name evidence="1" type="primary">rlmL</name>
    <name type="ordered locus">lpg0022</name>
</gene>
<protein>
    <recommendedName>
        <fullName evidence="1">Ribosomal RNA large subunit methyltransferase K/L</fullName>
    </recommendedName>
    <domain>
        <recommendedName>
            <fullName evidence="1">23S rRNA m2G2445 methyltransferase</fullName>
            <ecNumber evidence="1">2.1.1.173</ecNumber>
        </recommendedName>
        <alternativeName>
            <fullName evidence="1">rRNA (guanine-N(2)-)-methyltransferase RlmL</fullName>
        </alternativeName>
    </domain>
    <domain>
        <recommendedName>
            <fullName evidence="1">23S rRNA m7G2069 methyltransferase</fullName>
            <ecNumber evidence="1">2.1.1.264</ecNumber>
        </recommendedName>
        <alternativeName>
            <fullName evidence="1">rRNA (guanine-N(7)-)-methyltransferase RlmK</fullName>
        </alternativeName>
    </domain>
</protein>
<dbReference type="EC" id="2.1.1.173" evidence="1"/>
<dbReference type="EC" id="2.1.1.264" evidence="1"/>
<dbReference type="EMBL" id="AE017354">
    <property type="protein sequence ID" value="AAU26130.1"/>
    <property type="molecule type" value="Genomic_DNA"/>
</dbReference>
<dbReference type="RefSeq" id="YP_094077.1">
    <property type="nucleotide sequence ID" value="NC_002942.5"/>
</dbReference>
<dbReference type="SMR" id="Q5ZZI8"/>
<dbReference type="STRING" id="272624.lpg0022"/>
<dbReference type="PaxDb" id="272624-lpg0022"/>
<dbReference type="KEGG" id="lpn:lpg0022"/>
<dbReference type="PATRIC" id="fig|272624.6.peg.24"/>
<dbReference type="eggNOG" id="COG0116">
    <property type="taxonomic scope" value="Bacteria"/>
</dbReference>
<dbReference type="eggNOG" id="COG1092">
    <property type="taxonomic scope" value="Bacteria"/>
</dbReference>
<dbReference type="HOGENOM" id="CLU_014042_2_0_6"/>
<dbReference type="OrthoDB" id="9809404at2"/>
<dbReference type="Proteomes" id="UP000000609">
    <property type="component" value="Chromosome"/>
</dbReference>
<dbReference type="GO" id="GO:0005737">
    <property type="term" value="C:cytoplasm"/>
    <property type="evidence" value="ECO:0007669"/>
    <property type="project" value="UniProtKB-SubCell"/>
</dbReference>
<dbReference type="GO" id="GO:0052915">
    <property type="term" value="F:23S rRNA (guanine(2445)-N(2))-methyltransferase activity"/>
    <property type="evidence" value="ECO:0007669"/>
    <property type="project" value="UniProtKB-UniRule"/>
</dbReference>
<dbReference type="GO" id="GO:0003723">
    <property type="term" value="F:RNA binding"/>
    <property type="evidence" value="ECO:0007669"/>
    <property type="project" value="UniProtKB-KW"/>
</dbReference>
<dbReference type="GO" id="GO:0070043">
    <property type="term" value="F:rRNA (guanine-N7-)-methyltransferase activity"/>
    <property type="evidence" value="ECO:0007669"/>
    <property type="project" value="UniProtKB-UniRule"/>
</dbReference>
<dbReference type="CDD" id="cd02440">
    <property type="entry name" value="AdoMet_MTases"/>
    <property type="match status" value="1"/>
</dbReference>
<dbReference type="CDD" id="cd11715">
    <property type="entry name" value="THUMP_AdoMetMT"/>
    <property type="match status" value="1"/>
</dbReference>
<dbReference type="Gene3D" id="3.30.2130.30">
    <property type="match status" value="1"/>
</dbReference>
<dbReference type="Gene3D" id="3.30.750.80">
    <property type="entry name" value="RNA methyltransferase domain (HRMD) like"/>
    <property type="match status" value="1"/>
</dbReference>
<dbReference type="Gene3D" id="3.40.50.150">
    <property type="entry name" value="Vaccinia Virus protein VP39"/>
    <property type="match status" value="2"/>
</dbReference>
<dbReference type="HAMAP" id="MF_01858">
    <property type="entry name" value="23SrRNA_methyltr_KL"/>
    <property type="match status" value="1"/>
</dbReference>
<dbReference type="InterPro" id="IPR017244">
    <property type="entry name" value="23SrRNA_methyltr_KL"/>
</dbReference>
<dbReference type="InterPro" id="IPR002052">
    <property type="entry name" value="DNA_methylase_N6_adenine_CS"/>
</dbReference>
<dbReference type="InterPro" id="IPR000241">
    <property type="entry name" value="RlmKL-like_Mtase"/>
</dbReference>
<dbReference type="InterPro" id="IPR053943">
    <property type="entry name" value="RlmKL-like_Mtase_CS"/>
</dbReference>
<dbReference type="InterPro" id="IPR054170">
    <property type="entry name" value="RlmL_1st"/>
</dbReference>
<dbReference type="InterPro" id="IPR019614">
    <property type="entry name" value="SAM-dep_methyl-trfase"/>
</dbReference>
<dbReference type="InterPro" id="IPR029063">
    <property type="entry name" value="SAM-dependent_MTases_sf"/>
</dbReference>
<dbReference type="InterPro" id="IPR004114">
    <property type="entry name" value="THUMP_dom"/>
</dbReference>
<dbReference type="NCBIfam" id="NF008748">
    <property type="entry name" value="PRK11783.1"/>
    <property type="match status" value="1"/>
</dbReference>
<dbReference type="PANTHER" id="PTHR47313">
    <property type="entry name" value="RIBOSOMAL RNA LARGE SUBUNIT METHYLTRANSFERASE K/L"/>
    <property type="match status" value="1"/>
</dbReference>
<dbReference type="PANTHER" id="PTHR47313:SF1">
    <property type="entry name" value="RIBOSOMAL RNA LARGE SUBUNIT METHYLTRANSFERASE K_L"/>
    <property type="match status" value="1"/>
</dbReference>
<dbReference type="Pfam" id="PF10672">
    <property type="entry name" value="Methyltrans_SAM"/>
    <property type="match status" value="1"/>
</dbReference>
<dbReference type="Pfam" id="PF22020">
    <property type="entry name" value="RlmL_1st"/>
    <property type="match status" value="1"/>
</dbReference>
<dbReference type="Pfam" id="PF02926">
    <property type="entry name" value="THUMP"/>
    <property type="match status" value="1"/>
</dbReference>
<dbReference type="Pfam" id="PF01170">
    <property type="entry name" value="UPF0020"/>
    <property type="match status" value="1"/>
</dbReference>
<dbReference type="PIRSF" id="PIRSF037618">
    <property type="entry name" value="RNA_Mtase_bacteria_prd"/>
    <property type="match status" value="1"/>
</dbReference>
<dbReference type="SMART" id="SM00981">
    <property type="entry name" value="THUMP"/>
    <property type="match status" value="1"/>
</dbReference>
<dbReference type="SUPFAM" id="SSF53335">
    <property type="entry name" value="S-adenosyl-L-methionine-dependent methyltransferases"/>
    <property type="match status" value="2"/>
</dbReference>
<dbReference type="PROSITE" id="PS51165">
    <property type="entry name" value="THUMP"/>
    <property type="match status" value="1"/>
</dbReference>
<dbReference type="PROSITE" id="PS01261">
    <property type="entry name" value="UPF0020"/>
    <property type="match status" value="1"/>
</dbReference>
<evidence type="ECO:0000255" key="1">
    <source>
        <dbReference type="HAMAP-Rule" id="MF_01858"/>
    </source>
</evidence>
<feature type="chain" id="PRO_0000366772" description="Ribosomal RNA large subunit methyltransferase K/L">
    <location>
        <begin position="1"/>
        <end position="707"/>
    </location>
</feature>
<feature type="domain" description="THUMP" evidence="1">
    <location>
        <begin position="44"/>
        <end position="155"/>
    </location>
</feature>
<proteinExistence type="inferred from homology"/>
<comment type="function">
    <text evidence="1">Specifically methylates the guanine in position 2445 (m2G2445) and the guanine in position 2069 (m7G2069) of 23S rRNA.</text>
</comment>
<comment type="catalytic activity">
    <reaction evidence="1">
        <text>guanosine(2445) in 23S rRNA + S-adenosyl-L-methionine = N(2)-methylguanosine(2445) in 23S rRNA + S-adenosyl-L-homocysteine + H(+)</text>
        <dbReference type="Rhea" id="RHEA:42740"/>
        <dbReference type="Rhea" id="RHEA-COMP:10215"/>
        <dbReference type="Rhea" id="RHEA-COMP:10216"/>
        <dbReference type="ChEBI" id="CHEBI:15378"/>
        <dbReference type="ChEBI" id="CHEBI:57856"/>
        <dbReference type="ChEBI" id="CHEBI:59789"/>
        <dbReference type="ChEBI" id="CHEBI:74269"/>
        <dbReference type="ChEBI" id="CHEBI:74481"/>
        <dbReference type="EC" id="2.1.1.173"/>
    </reaction>
</comment>
<comment type="catalytic activity">
    <reaction evidence="1">
        <text>guanosine(2069) in 23S rRNA + S-adenosyl-L-methionine = N(2)-methylguanosine(2069) in 23S rRNA + S-adenosyl-L-homocysteine + H(+)</text>
        <dbReference type="Rhea" id="RHEA:43772"/>
        <dbReference type="Rhea" id="RHEA-COMP:10688"/>
        <dbReference type="Rhea" id="RHEA-COMP:10689"/>
        <dbReference type="ChEBI" id="CHEBI:15378"/>
        <dbReference type="ChEBI" id="CHEBI:57856"/>
        <dbReference type="ChEBI" id="CHEBI:59789"/>
        <dbReference type="ChEBI" id="CHEBI:74269"/>
        <dbReference type="ChEBI" id="CHEBI:74481"/>
        <dbReference type="EC" id="2.1.1.264"/>
    </reaction>
</comment>
<comment type="subcellular location">
    <subcellularLocation>
        <location evidence="1">Cytoplasm</location>
    </subcellularLocation>
</comment>
<comment type="similarity">
    <text evidence="1">Belongs to the methyltransferase superfamily. RlmKL family.</text>
</comment>
<keyword id="KW-0963">Cytoplasm</keyword>
<keyword id="KW-0489">Methyltransferase</keyword>
<keyword id="KW-1185">Reference proteome</keyword>
<keyword id="KW-0694">RNA-binding</keyword>
<keyword id="KW-0698">rRNA processing</keyword>
<keyword id="KW-0949">S-adenosyl-L-methionine</keyword>
<keyword id="KW-0808">Transferase</keyword>